<name>SNF12_CAEEL</name>
<accession>O45813</accession>
<protein>
    <recommendedName>
        <fullName evidence="6">Sodium-dependent transporter snf-12</fullName>
    </recommendedName>
    <alternativeName>
        <fullName evidence="9">Sodium: neurotransmitter symporter family protein snf-12</fullName>
    </alternativeName>
</protein>
<sequence>MNGEWKSALRLQIEALAKRNELHRKSSVDEIKKRTVDMDKRIVKLRELVGSSANDAALFYLECVCHADETERLLNRGSSVGKEKKWKKVKRKTSSSVAPPLSRTISSLPGVSSPDVIQTIDVSALEDQTPQRPHWWDQFQLYRRTDLLRFSKQNDRRELWRTQKDFFLSCLGFMVGVGHTMRFPAKVYQHGGGVFFIPYLFSLIFFGLPLVFLHLSLGQYTGQAANTAFQRLMPIGSGVGWALVVIAIPVAVYYNIIVAWAIHYFFQSAKGLLLGDELPWETCRDEWQLDNRCCNLHNLHSCFNSTNSITAPEAFFHSEVLSLSTFGDFALGPLQSHLVLSLAAAWLLVFFGVFKGLGSIAQTMNVTATVPYLLLSILLLRGISLPGANKGLTFLFTVDSTKLWKWQIWKSAAEQVFYELGIDAGPLISMAAFSRYRNNIYRDSVLLVIMDALTSCLSGMVIFSFVGFIASESNSNVNDVLKHDPLYLSFTVYPGVTSFMYWGGLWATLFFGMLVLAAIDAEFAWLEMIASAFMNHFSMKNKAVENRLLAFLCLAGFFLGLPLCAQGGIFVFHAIENLNANWNSFSLALLSVAIVCYVYGIDNYLTDISAMLRVPRIQISKATRLKEKLIYFFGPGGIYIKFSLCFICPVILTVLLVASVLGYQRISFAGRPIPIDYEIVAWIVMIGPLLVVPLVAFMQIRQIRNEGKLLKSLFDTSEWRESQDDSLEPKDLYMRQSGKFESPPNRRRTPTIFTHRENTYMYIDSRGPTVRSRVFPLGASLDPYGWKAGRLRDRQQQIEETASNYSEEDSATTNSFMASTVKHNDDMELTLFGSPPAILGDDEKIMTTRFSESMPVNYKCRNVEVPRIPNKLPQNMERMARKTRKKRSSPSASDPPVPTSPLPPPPKLQHCRSEPPMMNSKESHSPEIITPGDDSPSISNSSDDSSDDCFRRATVIRRKTSDDDAFTHFSTATAESISITPLDFPRQRSLSSVAIYDQEQKNGRSKVLSQLKRPKPIDMPPK</sequence>
<gene>
    <name evidence="9" type="primary">snf-12</name>
    <name evidence="5 9" type="synonym">nipi-2</name>
    <name evidence="9" type="ORF">T25B6.7</name>
</gene>
<feature type="chain" id="PRO_0000457723" description="Sodium-dependent transporter snf-12">
    <location>
        <begin position="1"/>
        <end position="1022"/>
    </location>
</feature>
<feature type="topological domain" description="Cytoplasmic" evidence="7">
    <location>
        <begin position="1"/>
        <end position="165"/>
    </location>
</feature>
<feature type="transmembrane region" description="Helical" evidence="1">
    <location>
        <begin position="166"/>
        <end position="185"/>
    </location>
</feature>
<feature type="topological domain" description="Extracellular" evidence="7">
    <location>
        <begin position="186"/>
        <end position="192"/>
    </location>
</feature>
<feature type="transmembrane region" description="Helical" evidence="1">
    <location>
        <begin position="193"/>
        <end position="213"/>
    </location>
</feature>
<feature type="topological domain" description="Cytoplasmic" evidence="7">
    <location>
        <begin position="214"/>
        <end position="241"/>
    </location>
</feature>
<feature type="transmembrane region" description="Helical" evidence="1">
    <location>
        <begin position="242"/>
        <end position="262"/>
    </location>
</feature>
<feature type="topological domain" description="Extracellular" evidence="7">
    <location>
        <begin position="263"/>
        <end position="337"/>
    </location>
</feature>
<feature type="transmembrane region" description="Helical" evidence="1">
    <location>
        <begin position="338"/>
        <end position="358"/>
    </location>
</feature>
<feature type="topological domain" description="Cytoplasmic" evidence="7">
    <location>
        <position position="359"/>
    </location>
</feature>
<feature type="transmembrane region" description="Helical" evidence="1">
    <location>
        <begin position="360"/>
        <end position="380"/>
    </location>
</feature>
<feature type="topological domain" description="Extracellular" evidence="7">
    <location>
        <begin position="381"/>
        <end position="412"/>
    </location>
</feature>
<feature type="transmembrane region" description="Helical" evidence="1">
    <location>
        <begin position="413"/>
        <end position="433"/>
    </location>
</feature>
<feature type="topological domain" description="Cytoplasmic" evidence="7">
    <location>
        <begin position="434"/>
        <end position="444"/>
    </location>
</feature>
<feature type="transmembrane region" description="Helical" evidence="1">
    <location>
        <begin position="445"/>
        <end position="465"/>
    </location>
</feature>
<feature type="topological domain" description="Extracellular" evidence="7">
    <location>
        <begin position="466"/>
        <end position="498"/>
    </location>
</feature>
<feature type="transmembrane region" description="Helical" evidence="1">
    <location>
        <begin position="499"/>
        <end position="519"/>
    </location>
</feature>
<feature type="topological domain" description="Cytoplasmic" evidence="7">
    <location>
        <begin position="520"/>
        <end position="550"/>
    </location>
</feature>
<feature type="transmembrane region" description="Helical" evidence="1">
    <location>
        <begin position="551"/>
        <end position="571"/>
    </location>
</feature>
<feature type="topological domain" description="Extracellular" evidence="7">
    <location>
        <begin position="572"/>
        <end position="584"/>
    </location>
</feature>
<feature type="transmembrane region" description="Helical" evidence="1">
    <location>
        <begin position="585"/>
        <end position="605"/>
    </location>
</feature>
<feature type="topological domain" description="Cytoplasmic" evidence="7">
    <location>
        <begin position="606"/>
        <end position="641"/>
    </location>
</feature>
<feature type="transmembrane region" description="Helical" evidence="1">
    <location>
        <begin position="642"/>
        <end position="662"/>
    </location>
</feature>
<feature type="topological domain" description="Extracellular" evidence="7">
    <location>
        <begin position="663"/>
        <end position="677"/>
    </location>
</feature>
<feature type="transmembrane region" description="Helical" evidence="1">
    <location>
        <begin position="678"/>
        <end position="698"/>
    </location>
</feature>
<feature type="topological domain" description="Cytoplasmic" evidence="7">
    <location>
        <begin position="699"/>
        <end position="1022"/>
    </location>
</feature>
<feature type="region of interest" description="Disordered" evidence="2">
    <location>
        <begin position="867"/>
        <end position="948"/>
    </location>
</feature>
<feature type="region of interest" description="Disordered" evidence="2">
    <location>
        <begin position="995"/>
        <end position="1022"/>
    </location>
</feature>
<feature type="compositionally biased region" description="Pro residues" evidence="2">
    <location>
        <begin position="893"/>
        <end position="907"/>
    </location>
</feature>
<feature type="compositionally biased region" description="Low complexity" evidence="2">
    <location>
        <begin position="933"/>
        <end position="943"/>
    </location>
</feature>
<feature type="mutagenesis site" description="In fr2; almost completely abolishes induction of nlp-29 expression upon infection with Drechmeria coniospora or upon injury. Induction of nlp-29 unaffected by osmotic stress." evidence="3">
    <original>G</original>
    <variation>D</variation>
    <location>
        <position position="193"/>
    </location>
</feature>
<evidence type="ECO:0000255" key="1"/>
<evidence type="ECO:0000256" key="2">
    <source>
        <dbReference type="SAM" id="MobiDB-lite"/>
    </source>
</evidence>
<evidence type="ECO:0000269" key="3">
    <source>
    </source>
</evidence>
<evidence type="ECO:0000269" key="4">
    <source>
    </source>
</evidence>
<evidence type="ECO:0000303" key="5">
    <source>
    </source>
</evidence>
<evidence type="ECO:0000305" key="6"/>
<evidence type="ECO:0000305" key="7">
    <source>
    </source>
</evidence>
<evidence type="ECO:0000312" key="8">
    <source>
        <dbReference type="Proteomes" id="UP000001940"/>
    </source>
</evidence>
<evidence type="ECO:0000312" key="9">
    <source>
        <dbReference type="WormBase" id="T25B6.7"/>
    </source>
</evidence>
<keyword id="KW-0963">Cytoplasm</keyword>
<keyword id="KW-0472">Membrane</keyword>
<keyword id="KW-1185">Reference proteome</keyword>
<keyword id="KW-0769">Symport</keyword>
<keyword id="KW-0812">Transmembrane</keyword>
<keyword id="KW-1133">Transmembrane helix</keyword>
<keyword id="KW-0813">Transport</keyword>
<dbReference type="EMBL" id="BX284606">
    <property type="protein sequence ID" value="CCD65393.1"/>
    <property type="molecule type" value="Genomic_DNA"/>
</dbReference>
<dbReference type="PIR" id="T28905">
    <property type="entry name" value="T28905"/>
</dbReference>
<dbReference type="RefSeq" id="NP_509527.1">
    <property type="nucleotide sequence ID" value="NM_077126.4"/>
</dbReference>
<dbReference type="SMR" id="O45813"/>
<dbReference type="FunCoup" id="O45813">
    <property type="interactions" value="2"/>
</dbReference>
<dbReference type="STRING" id="6239.T25B6.7.1"/>
<dbReference type="PaxDb" id="6239-T25B6.7"/>
<dbReference type="EnsemblMetazoa" id="T25B6.7.1">
    <property type="protein sequence ID" value="T25B6.7.1"/>
    <property type="gene ID" value="WBGene00004911"/>
</dbReference>
<dbReference type="GeneID" id="181143"/>
<dbReference type="KEGG" id="cel:CELE_T25B6.7"/>
<dbReference type="UCSC" id="T25B6.7">
    <property type="organism name" value="c. elegans"/>
</dbReference>
<dbReference type="AGR" id="WB:WBGene00004911"/>
<dbReference type="CTD" id="181143"/>
<dbReference type="WormBase" id="T25B6.7">
    <property type="protein sequence ID" value="CE29353"/>
    <property type="gene ID" value="WBGene00004911"/>
    <property type="gene designation" value="snf-12"/>
</dbReference>
<dbReference type="eggNOG" id="KOG3660">
    <property type="taxonomic scope" value="Eukaryota"/>
</dbReference>
<dbReference type="GeneTree" id="ENSGT00940000159688"/>
<dbReference type="HOGENOM" id="CLU_011338_0_0_1"/>
<dbReference type="InParanoid" id="O45813"/>
<dbReference type="OMA" id="THRENTY"/>
<dbReference type="OrthoDB" id="6581954at2759"/>
<dbReference type="PhylomeDB" id="O45813"/>
<dbReference type="PRO" id="PR:O45813"/>
<dbReference type="Proteomes" id="UP000001940">
    <property type="component" value="Chromosome X"/>
</dbReference>
<dbReference type="Bgee" id="WBGene00004911">
    <property type="expression patterns" value="Expressed in larva and 2 other cell types or tissues"/>
</dbReference>
<dbReference type="GO" id="GO:0045177">
    <property type="term" value="C:apical part of cell"/>
    <property type="evidence" value="ECO:0000314"/>
    <property type="project" value="WormBase"/>
</dbReference>
<dbReference type="GO" id="GO:0030139">
    <property type="term" value="C:endocytic vesicle"/>
    <property type="evidence" value="ECO:0000314"/>
    <property type="project" value="WormBase"/>
</dbReference>
<dbReference type="GO" id="GO:0005886">
    <property type="term" value="C:plasma membrane"/>
    <property type="evidence" value="ECO:0000318"/>
    <property type="project" value="GO_Central"/>
</dbReference>
<dbReference type="GO" id="GO:0005283">
    <property type="term" value="F:amino acid:sodium symporter activity"/>
    <property type="evidence" value="ECO:0000318"/>
    <property type="project" value="GO_Central"/>
</dbReference>
<dbReference type="GO" id="GO:0015179">
    <property type="term" value="F:L-amino acid transmembrane transporter activity"/>
    <property type="evidence" value="ECO:0000318"/>
    <property type="project" value="GO_Central"/>
</dbReference>
<dbReference type="GO" id="GO:0097677">
    <property type="term" value="F:STAT family protein binding"/>
    <property type="evidence" value="ECO:0000353"/>
    <property type="project" value="WormBase"/>
</dbReference>
<dbReference type="GO" id="GO:1903804">
    <property type="term" value="P:glycine import across plasma membrane"/>
    <property type="evidence" value="ECO:0000318"/>
    <property type="project" value="GO_Central"/>
</dbReference>
<dbReference type="GO" id="GO:0002804">
    <property type="term" value="P:positive regulation of antifungal peptide production"/>
    <property type="evidence" value="ECO:0000315"/>
    <property type="project" value="WormBase"/>
</dbReference>
<dbReference type="GO" id="GO:0035725">
    <property type="term" value="P:sodium ion transmembrane transport"/>
    <property type="evidence" value="ECO:0000318"/>
    <property type="project" value="GO_Central"/>
</dbReference>
<dbReference type="CDD" id="cd10324">
    <property type="entry name" value="SLC6sbd"/>
    <property type="match status" value="1"/>
</dbReference>
<dbReference type="InterPro" id="IPR000175">
    <property type="entry name" value="Na/ntran_symport"/>
</dbReference>
<dbReference type="InterPro" id="IPR037272">
    <property type="entry name" value="SNS_sf"/>
</dbReference>
<dbReference type="PANTHER" id="PTHR11616:SF324">
    <property type="entry name" value="SODIUM-DEPENDENT TRANSPORTER SNF-12"/>
    <property type="match status" value="1"/>
</dbReference>
<dbReference type="PANTHER" id="PTHR11616">
    <property type="entry name" value="SODIUM/CHLORIDE DEPENDENT TRANSPORTER"/>
    <property type="match status" value="1"/>
</dbReference>
<dbReference type="Pfam" id="PF00209">
    <property type="entry name" value="SNF"/>
    <property type="match status" value="1"/>
</dbReference>
<dbReference type="PRINTS" id="PR00176">
    <property type="entry name" value="NANEUSMPORT"/>
</dbReference>
<dbReference type="SUPFAM" id="SSF161070">
    <property type="entry name" value="SNF-like"/>
    <property type="match status" value="1"/>
</dbReference>
<dbReference type="PROSITE" id="PS50267">
    <property type="entry name" value="NA_NEUROTRAN_SYMP_3"/>
    <property type="match status" value="1"/>
</dbReference>
<reference evidence="8" key="1">
    <citation type="journal article" date="1998" name="Science">
        <title>Genome sequence of the nematode C. elegans: a platform for investigating biology.</title>
        <authorList>
            <consortium name="The C. elegans sequencing consortium"/>
        </authorList>
    </citation>
    <scope>NUCLEOTIDE SEQUENCE [LARGE SCALE GENOMIC DNA]</scope>
    <source>
        <strain evidence="8">Bristol N2</strain>
    </source>
</reference>
<reference evidence="6" key="2">
    <citation type="journal article" date="2011" name="Cell Host Microbe">
        <title>Unusual regulation of a STAT protein by an SLC6 family transporter in C. elegans epidermal innate immunity.</title>
        <authorList>
            <person name="Dierking K."/>
            <person name="Polanowska J."/>
            <person name="Omi S."/>
            <person name="Engelmann I."/>
            <person name="Gut M."/>
            <person name="Lembo F."/>
            <person name="Ewbank J.J."/>
            <person name="Pujol N."/>
        </authorList>
    </citation>
    <scope>FUNCTION</scope>
    <scope>INTERACTION WITH STA-2</scope>
    <scope>SUBCELLULAR LOCATION</scope>
    <scope>DEVELOPMENTAL STAGE</scope>
    <scope>MUTAGENESIS OF GLY-193</scope>
</reference>
<reference evidence="6" key="3">
    <citation type="journal article" date="2020" name="Elife">
        <title>Microtubule plus-end dynamics link wound repair to the innate immune response.</title>
        <authorList>
            <person name="Taffoni C."/>
            <person name="Omi S."/>
            <person name="Huber C."/>
            <person name="Mailfert S."/>
            <person name="Fallet M."/>
            <person name="Rupprecht J.F."/>
            <person name="Ewbank J.J."/>
            <person name="Pujol N."/>
        </authorList>
    </citation>
    <scope>FUNCTION</scope>
    <scope>SUBCELLULAR LOCATION</scope>
</reference>
<proteinExistence type="evidence at protein level"/>
<comment type="function">
    <text evidence="3 4">Probably mediates sodium-dependent uptake of unknown small molecule(s) (PubMed:21575913). By positively modulating expression, in the epidermis, of antimicrobial peptides such as nlp-29, plays a role in resistance to fungal infection and in the response to physical wounding and phorbol ester PMA treatment (PubMed:21575913). Role in response to wounding of the epidermis may be facilitated by recruitment of snf-12 to the wound site by microtubule-dependent vesicle trafficking (PubMed:31995031). Functions cell autonomously in the epidermis, in concert with STAT transcription factor sta-2, probably acting at vesicular membranes, downstream of a p38 MAPK/pmk-1 pathway (PubMed:21575913).</text>
</comment>
<comment type="subunit">
    <text evidence="3">May interact with STAT family transcription factor sta-2; the interaction is probably direct.</text>
</comment>
<comment type="subcellular location">
    <subcellularLocation>
        <location evidence="1">Membrane</location>
        <topology evidence="1">Multi-pass membrane protein</topology>
    </subcellularLocation>
    <subcellularLocation>
        <location evidence="7">Cytoplasm</location>
    </subcellularLocation>
    <subcellularLocation>
        <location evidence="7">Vesicle</location>
    </subcellularLocation>
    <text evidence="3 4">Localized to vesicles, which may be a type of endosome (PubMed:21575913). Localized to an unknown apical membrane compartment (PubMed:31995031).</text>
</comment>
<comment type="developmental stage">
    <text evidence="3">Expressed in the epidermis throughout development (PubMed:21575913). Also expressed in the seam cells, which are specialized epithelial cells that secrete the cuticle, as well as in the excretory cell, and the amphid and phasmid socket cells (PubMed:21575913).</text>
</comment>
<comment type="similarity">
    <text evidence="6">Belongs to the sodium:neurotransmitter symporter (SNF) (TC 2.A.22) family.</text>
</comment>
<organism evidence="8">
    <name type="scientific">Caenorhabditis elegans</name>
    <dbReference type="NCBI Taxonomy" id="6239"/>
    <lineage>
        <taxon>Eukaryota</taxon>
        <taxon>Metazoa</taxon>
        <taxon>Ecdysozoa</taxon>
        <taxon>Nematoda</taxon>
        <taxon>Chromadorea</taxon>
        <taxon>Rhabditida</taxon>
        <taxon>Rhabditina</taxon>
        <taxon>Rhabditomorpha</taxon>
        <taxon>Rhabditoidea</taxon>
        <taxon>Rhabditidae</taxon>
        <taxon>Peloderinae</taxon>
        <taxon>Caenorhabditis</taxon>
    </lineage>
</organism>